<accession>C4L6Q0</accession>
<proteinExistence type="inferred from homology"/>
<name>PANB_EXISA</name>
<protein>
    <recommendedName>
        <fullName evidence="1">3-methyl-2-oxobutanoate hydroxymethyltransferase</fullName>
        <ecNumber evidence="1">2.1.2.11</ecNumber>
    </recommendedName>
    <alternativeName>
        <fullName evidence="1">Ketopantoate hydroxymethyltransferase</fullName>
        <shortName evidence="1">KPHMT</shortName>
    </alternativeName>
</protein>
<evidence type="ECO:0000255" key="1">
    <source>
        <dbReference type="HAMAP-Rule" id="MF_00156"/>
    </source>
</evidence>
<keyword id="KW-0963">Cytoplasm</keyword>
<keyword id="KW-0460">Magnesium</keyword>
<keyword id="KW-0479">Metal-binding</keyword>
<keyword id="KW-0566">Pantothenate biosynthesis</keyword>
<keyword id="KW-0808">Transferase</keyword>
<feature type="chain" id="PRO_1000203472" description="3-methyl-2-oxobutanoate hydroxymethyltransferase">
    <location>
        <begin position="1"/>
        <end position="277"/>
    </location>
</feature>
<feature type="active site" description="Proton acceptor" evidence="1">
    <location>
        <position position="181"/>
    </location>
</feature>
<feature type="binding site" evidence="1">
    <location>
        <begin position="43"/>
        <end position="44"/>
    </location>
    <ligand>
        <name>3-methyl-2-oxobutanoate</name>
        <dbReference type="ChEBI" id="CHEBI:11851"/>
    </ligand>
</feature>
<feature type="binding site" evidence="1">
    <location>
        <position position="43"/>
    </location>
    <ligand>
        <name>Mg(2+)</name>
        <dbReference type="ChEBI" id="CHEBI:18420"/>
    </ligand>
</feature>
<feature type="binding site" evidence="1">
    <location>
        <position position="82"/>
    </location>
    <ligand>
        <name>3-methyl-2-oxobutanoate</name>
        <dbReference type="ChEBI" id="CHEBI:11851"/>
    </ligand>
</feature>
<feature type="binding site" evidence="1">
    <location>
        <position position="82"/>
    </location>
    <ligand>
        <name>Mg(2+)</name>
        <dbReference type="ChEBI" id="CHEBI:18420"/>
    </ligand>
</feature>
<feature type="binding site" evidence="1">
    <location>
        <position position="112"/>
    </location>
    <ligand>
        <name>3-methyl-2-oxobutanoate</name>
        <dbReference type="ChEBI" id="CHEBI:11851"/>
    </ligand>
</feature>
<feature type="binding site" evidence="1">
    <location>
        <position position="114"/>
    </location>
    <ligand>
        <name>Mg(2+)</name>
        <dbReference type="ChEBI" id="CHEBI:18420"/>
    </ligand>
</feature>
<reference key="1">
    <citation type="journal article" date="2011" name="J. Bacteriol.">
        <title>Complete genome sequence of the Thermophilic Bacterium Exiguobacterium sp. AT1b.</title>
        <authorList>
            <person name="Vishnivetskaya T.A."/>
            <person name="Lucas S."/>
            <person name="Copeland A."/>
            <person name="Lapidus A."/>
            <person name="Glavina del Rio T."/>
            <person name="Dalin E."/>
            <person name="Tice H."/>
            <person name="Bruce D.C."/>
            <person name="Goodwin L.A."/>
            <person name="Pitluck S."/>
            <person name="Saunders E."/>
            <person name="Brettin T."/>
            <person name="Detter C."/>
            <person name="Han C."/>
            <person name="Larimer F."/>
            <person name="Land M.L."/>
            <person name="Hauser L.J."/>
            <person name="Kyrpides N.C."/>
            <person name="Ovchinnikova G."/>
            <person name="Kathariou S."/>
            <person name="Ramaley R.F."/>
            <person name="Rodrigues D.F."/>
            <person name="Hendrix C."/>
            <person name="Richardson P."/>
            <person name="Tiedje J.M."/>
        </authorList>
    </citation>
    <scope>NUCLEOTIDE SEQUENCE [LARGE SCALE GENOMIC DNA]</scope>
    <source>
        <strain>ATCC BAA-1283 / AT1b</strain>
    </source>
</reference>
<dbReference type="EC" id="2.1.2.11" evidence="1"/>
<dbReference type="EMBL" id="CP001615">
    <property type="protein sequence ID" value="ACQ71929.1"/>
    <property type="molecule type" value="Genomic_DNA"/>
</dbReference>
<dbReference type="RefSeq" id="WP_015881488.1">
    <property type="nucleotide sequence ID" value="NC_012673.1"/>
</dbReference>
<dbReference type="SMR" id="C4L6Q0"/>
<dbReference type="STRING" id="360911.EAT1b_3015"/>
<dbReference type="KEGG" id="eat:EAT1b_3015"/>
<dbReference type="eggNOG" id="COG0413">
    <property type="taxonomic scope" value="Bacteria"/>
</dbReference>
<dbReference type="HOGENOM" id="CLU_036645_1_0_9"/>
<dbReference type="OrthoDB" id="9781789at2"/>
<dbReference type="UniPathway" id="UPA00028">
    <property type="reaction ID" value="UER00003"/>
</dbReference>
<dbReference type="Proteomes" id="UP000000716">
    <property type="component" value="Chromosome"/>
</dbReference>
<dbReference type="GO" id="GO:0005737">
    <property type="term" value="C:cytoplasm"/>
    <property type="evidence" value="ECO:0007669"/>
    <property type="project" value="UniProtKB-SubCell"/>
</dbReference>
<dbReference type="GO" id="GO:0003864">
    <property type="term" value="F:3-methyl-2-oxobutanoate hydroxymethyltransferase activity"/>
    <property type="evidence" value="ECO:0007669"/>
    <property type="project" value="UniProtKB-UniRule"/>
</dbReference>
<dbReference type="GO" id="GO:0000287">
    <property type="term" value="F:magnesium ion binding"/>
    <property type="evidence" value="ECO:0007669"/>
    <property type="project" value="TreeGrafter"/>
</dbReference>
<dbReference type="GO" id="GO:0015940">
    <property type="term" value="P:pantothenate biosynthetic process"/>
    <property type="evidence" value="ECO:0007669"/>
    <property type="project" value="UniProtKB-UniRule"/>
</dbReference>
<dbReference type="CDD" id="cd06557">
    <property type="entry name" value="KPHMT-like"/>
    <property type="match status" value="1"/>
</dbReference>
<dbReference type="FunFam" id="3.20.20.60:FF:000003">
    <property type="entry name" value="3-methyl-2-oxobutanoate hydroxymethyltransferase"/>
    <property type="match status" value="1"/>
</dbReference>
<dbReference type="Gene3D" id="3.20.20.60">
    <property type="entry name" value="Phosphoenolpyruvate-binding domains"/>
    <property type="match status" value="1"/>
</dbReference>
<dbReference type="HAMAP" id="MF_00156">
    <property type="entry name" value="PanB"/>
    <property type="match status" value="1"/>
</dbReference>
<dbReference type="InterPro" id="IPR003700">
    <property type="entry name" value="Pantoate_hydroxy_MeTrfase"/>
</dbReference>
<dbReference type="InterPro" id="IPR015813">
    <property type="entry name" value="Pyrv/PenolPyrv_kinase-like_dom"/>
</dbReference>
<dbReference type="InterPro" id="IPR040442">
    <property type="entry name" value="Pyrv_kinase-like_dom_sf"/>
</dbReference>
<dbReference type="NCBIfam" id="TIGR00222">
    <property type="entry name" value="panB"/>
    <property type="match status" value="1"/>
</dbReference>
<dbReference type="NCBIfam" id="NF001452">
    <property type="entry name" value="PRK00311.1"/>
    <property type="match status" value="1"/>
</dbReference>
<dbReference type="PANTHER" id="PTHR20881">
    <property type="entry name" value="3-METHYL-2-OXOBUTANOATE HYDROXYMETHYLTRANSFERASE"/>
    <property type="match status" value="1"/>
</dbReference>
<dbReference type="PANTHER" id="PTHR20881:SF0">
    <property type="entry name" value="3-METHYL-2-OXOBUTANOATE HYDROXYMETHYLTRANSFERASE"/>
    <property type="match status" value="1"/>
</dbReference>
<dbReference type="Pfam" id="PF02548">
    <property type="entry name" value="Pantoate_transf"/>
    <property type="match status" value="1"/>
</dbReference>
<dbReference type="PIRSF" id="PIRSF000388">
    <property type="entry name" value="Pantoate_hydroxy_MeTrfase"/>
    <property type="match status" value="1"/>
</dbReference>
<dbReference type="SUPFAM" id="SSF51621">
    <property type="entry name" value="Phosphoenolpyruvate/pyruvate domain"/>
    <property type="match status" value="1"/>
</dbReference>
<gene>
    <name evidence="1" type="primary">panB</name>
    <name type="ordered locus">EAT1b_3015</name>
</gene>
<sequence>MHTMTTLLKKMNEQEKLVMLTAYDYPSAKLAESAGVDLILVGDSLGMVVLGYDSTIPVTMEDMLHHSKAVRRGAQHTFVVVDMPFASYHGDFDRTLQAASRLFQEGRADAIKLEGAGDVLQTIERLTQVGMPCVAHLGLTPQSVGVLEGYKVQGKSLEAAETLLQDSLAAERAGAKMLVLECVPHQLAKRIAEELTIPVIGIGAGADVDGQVLVYHDVLKYGVDRLPKFVQAYADLNEVATDAIRSYVEETKNGHFPQERHTFTMDESLLDSLYGGK</sequence>
<organism>
    <name type="scientific">Exiguobacterium sp. (strain ATCC BAA-1283 / AT1b)</name>
    <dbReference type="NCBI Taxonomy" id="360911"/>
    <lineage>
        <taxon>Bacteria</taxon>
        <taxon>Bacillati</taxon>
        <taxon>Bacillota</taxon>
        <taxon>Bacilli</taxon>
        <taxon>Bacillales</taxon>
        <taxon>Bacillales Family XII. Incertae Sedis</taxon>
        <taxon>Exiguobacterium</taxon>
    </lineage>
</organism>
<comment type="function">
    <text evidence="1">Catalyzes the reversible reaction in which hydroxymethyl group from 5,10-methylenetetrahydrofolate is transferred onto alpha-ketoisovalerate to form ketopantoate.</text>
</comment>
<comment type="catalytic activity">
    <reaction evidence="1">
        <text>3-methyl-2-oxobutanoate + (6R)-5,10-methylene-5,6,7,8-tetrahydrofolate + H2O = 2-dehydropantoate + (6S)-5,6,7,8-tetrahydrofolate</text>
        <dbReference type="Rhea" id="RHEA:11824"/>
        <dbReference type="ChEBI" id="CHEBI:11561"/>
        <dbReference type="ChEBI" id="CHEBI:11851"/>
        <dbReference type="ChEBI" id="CHEBI:15377"/>
        <dbReference type="ChEBI" id="CHEBI:15636"/>
        <dbReference type="ChEBI" id="CHEBI:57453"/>
        <dbReference type="EC" id="2.1.2.11"/>
    </reaction>
</comment>
<comment type="cofactor">
    <cofactor evidence="1">
        <name>Mg(2+)</name>
        <dbReference type="ChEBI" id="CHEBI:18420"/>
    </cofactor>
    <text evidence="1">Binds 1 Mg(2+) ion per subunit.</text>
</comment>
<comment type="pathway">
    <text evidence="1">Cofactor biosynthesis; (R)-pantothenate biosynthesis; (R)-pantoate from 3-methyl-2-oxobutanoate: step 1/2.</text>
</comment>
<comment type="subunit">
    <text evidence="1">Homodecamer; pentamer of dimers.</text>
</comment>
<comment type="subcellular location">
    <subcellularLocation>
        <location evidence="1">Cytoplasm</location>
    </subcellularLocation>
</comment>
<comment type="similarity">
    <text evidence="1">Belongs to the PanB family.</text>
</comment>